<organism>
    <name type="scientific">Oryza sativa subsp. japonica</name>
    <name type="common">Rice</name>
    <dbReference type="NCBI Taxonomy" id="39947"/>
    <lineage>
        <taxon>Eukaryota</taxon>
        <taxon>Viridiplantae</taxon>
        <taxon>Streptophyta</taxon>
        <taxon>Embryophyta</taxon>
        <taxon>Tracheophyta</taxon>
        <taxon>Spermatophyta</taxon>
        <taxon>Magnoliopsida</taxon>
        <taxon>Liliopsida</taxon>
        <taxon>Poales</taxon>
        <taxon>Poaceae</taxon>
        <taxon>BOP clade</taxon>
        <taxon>Oryzoideae</taxon>
        <taxon>Oryzeae</taxon>
        <taxon>Oryzinae</taxon>
        <taxon>Oryza</taxon>
        <taxon>Oryza sativa</taxon>
    </lineage>
</organism>
<sequence>MAAAALLRRSPAARALLSPALSSRLVASKPHSSSPAPPPPPSKAGANTKTFSIYRWDPDSPSTKPHLKDYKVDLSDCGPMVLDVLLKIKNEQDPSLTFRRSCREGICGSCAMNIDGDNGLACLTKISSASSASTISPLPHMFVIKDLVVDMTNFYNQYKSVEPWLKRKDAPPQPGKEIPQTKADRAKLDGMYECILCACCSTSCPSYWWNPEEYLGPAALLHANRWIQDSRDQFTKERLDSINDEFKLYRCHTIKNCTHACPKGLNPAKHIDTIKKLQLEA</sequence>
<name>SDHB1_ORYSJ</name>
<comment type="function">
    <text evidence="2">Iron-sulfur protein (IP) subunit of succinate dehydrogenase (SDH) that is involved in complex II of the mitochondrial electron transport chain and is responsible for transferring electrons from succinate to ubiquinone (coenzyme Q).</text>
</comment>
<comment type="catalytic activity">
    <reaction evidence="8">
        <text>a quinone + succinate = fumarate + a quinol</text>
        <dbReference type="Rhea" id="RHEA:40523"/>
        <dbReference type="ChEBI" id="CHEBI:24646"/>
        <dbReference type="ChEBI" id="CHEBI:29806"/>
        <dbReference type="ChEBI" id="CHEBI:30031"/>
        <dbReference type="ChEBI" id="CHEBI:132124"/>
        <dbReference type="EC" id="1.3.5.1"/>
    </reaction>
</comment>
<comment type="cofactor">
    <cofactor evidence="1">
        <name>[2Fe-2S] cluster</name>
        <dbReference type="ChEBI" id="CHEBI:190135"/>
    </cofactor>
    <text evidence="1">Binds 1 [2Fe-2S] cluster.</text>
</comment>
<comment type="cofactor">
    <cofactor evidence="1">
        <name>[3Fe-4S] cluster</name>
        <dbReference type="ChEBI" id="CHEBI:21137"/>
    </cofactor>
    <text evidence="1">Binds 1 [3Fe-4S] cluster.</text>
</comment>
<comment type="cofactor">
    <cofactor evidence="1">
        <name>[4Fe-4S] cluster</name>
        <dbReference type="ChEBI" id="CHEBI:49883"/>
    </cofactor>
    <text evidence="1">Binds 1 [4Fe-4S] cluster.</text>
</comment>
<comment type="pathway">
    <text evidence="8">Carbohydrate metabolism; tricarboxylic acid cycle; fumarate from succinate (eukaryal route): step 1/1.</text>
</comment>
<comment type="subunit">
    <text evidence="7">Component of complex II composed of eight subunits in plants: four classical SDH subunits SDH1, SDH2, SDH3 and SDH4 (a flavoprotein (FP), an iron-sulfur protein (IP), and a cytochrome b composed of a large and a small subunit.), as well as four subunits unknown in mitochondria from bacteria and heterotrophic eukaryotes.</text>
</comment>
<comment type="subcellular location">
    <subcellularLocation>
        <location evidence="2">Mitochondrion inner membrane</location>
        <topology evidence="2">Peripheral membrane protein</topology>
        <orientation evidence="2">Matrix side</orientation>
    </subcellularLocation>
</comment>
<comment type="similarity">
    <text evidence="8">Belongs to the succinate dehydrogenase/fumarate reductase iron-sulfur protein family.</text>
</comment>
<dbReference type="EC" id="1.3.5.1" evidence="8"/>
<dbReference type="EMBL" id="AB017428">
    <property type="protein sequence ID" value="BAA82749.1"/>
    <property type="molecule type" value="mRNA"/>
</dbReference>
<dbReference type="EMBL" id="AB017429">
    <property type="protein sequence ID" value="BAA82750.1"/>
    <property type="molecule type" value="Genomic_DNA"/>
</dbReference>
<dbReference type="EMBL" id="AP003925">
    <property type="protein sequence ID" value="BAD09055.1"/>
    <property type="molecule type" value="Genomic_DNA"/>
</dbReference>
<dbReference type="EMBL" id="AP008214">
    <property type="protein sequence ID" value="BAF22790.1"/>
    <property type="molecule type" value="Genomic_DNA"/>
</dbReference>
<dbReference type="EMBL" id="AP014964">
    <property type="protein sequence ID" value="BAT03586.1"/>
    <property type="molecule type" value="Genomic_DNA"/>
</dbReference>
<dbReference type="EMBL" id="AK059815">
    <property type="protein sequence ID" value="BAG87144.1"/>
    <property type="molecule type" value="mRNA"/>
</dbReference>
<dbReference type="EMBL" id="AK104303">
    <property type="protein sequence ID" value="BAG96585.1"/>
    <property type="molecule type" value="mRNA"/>
</dbReference>
<dbReference type="EMBL" id="AK104304">
    <property type="protein sequence ID" value="BAG96586.1"/>
    <property type="molecule type" value="mRNA"/>
</dbReference>
<dbReference type="RefSeq" id="XP_015650211.1">
    <property type="nucleotide sequence ID" value="XM_015794725.1"/>
</dbReference>
<dbReference type="RefSeq" id="XP_015650213.1">
    <property type="nucleotide sequence ID" value="XM_015794727.1"/>
</dbReference>
<dbReference type="SMR" id="Q9S827"/>
<dbReference type="FunCoup" id="Q9S827">
    <property type="interactions" value="2661"/>
</dbReference>
<dbReference type="STRING" id="39947.Q9S827"/>
<dbReference type="PaxDb" id="39947-Q9S827"/>
<dbReference type="EnsemblPlants" id="Os08t0120000-01">
    <property type="protein sequence ID" value="Os08t0120000-01"/>
    <property type="gene ID" value="Os08g0120000"/>
</dbReference>
<dbReference type="EnsemblPlants" id="Os08t0120000-02">
    <property type="protein sequence ID" value="Os08t0120000-02"/>
    <property type="gene ID" value="Os08g0120000"/>
</dbReference>
<dbReference type="EnsemblPlants" id="Os08t0120000-04">
    <property type="protein sequence ID" value="Os08t0120000-04"/>
    <property type="gene ID" value="Os08g0120000"/>
</dbReference>
<dbReference type="Gramene" id="Os08t0120000-01">
    <property type="protein sequence ID" value="Os08t0120000-01"/>
    <property type="gene ID" value="Os08g0120000"/>
</dbReference>
<dbReference type="Gramene" id="Os08t0120000-02">
    <property type="protein sequence ID" value="Os08t0120000-02"/>
    <property type="gene ID" value="Os08g0120000"/>
</dbReference>
<dbReference type="Gramene" id="Os08t0120000-04">
    <property type="protein sequence ID" value="Os08t0120000-04"/>
    <property type="gene ID" value="Os08g0120000"/>
</dbReference>
<dbReference type="KEGG" id="dosa:Os08g0120000"/>
<dbReference type="eggNOG" id="KOG1741">
    <property type="taxonomic scope" value="Eukaryota"/>
</dbReference>
<dbReference type="eggNOG" id="KOG3049">
    <property type="taxonomic scope" value="Eukaryota"/>
</dbReference>
<dbReference type="HOGENOM" id="CLU_044838_0_1_1"/>
<dbReference type="InParanoid" id="Q9S827"/>
<dbReference type="OMA" id="SNMKTFQ"/>
<dbReference type="OrthoDB" id="732707at2759"/>
<dbReference type="UniPathway" id="UPA00223">
    <property type="reaction ID" value="UER01006"/>
</dbReference>
<dbReference type="Proteomes" id="UP000000763">
    <property type="component" value="Chromosome 8"/>
</dbReference>
<dbReference type="Proteomes" id="UP000059680">
    <property type="component" value="Chromosome 8"/>
</dbReference>
<dbReference type="ExpressionAtlas" id="Q9S827">
    <property type="expression patterns" value="baseline and differential"/>
</dbReference>
<dbReference type="GO" id="GO:0005743">
    <property type="term" value="C:mitochondrial inner membrane"/>
    <property type="evidence" value="ECO:0007669"/>
    <property type="project" value="UniProtKB-SubCell"/>
</dbReference>
<dbReference type="GO" id="GO:0005739">
    <property type="term" value="C:mitochondrion"/>
    <property type="evidence" value="ECO:0000318"/>
    <property type="project" value="GO_Central"/>
</dbReference>
<dbReference type="GO" id="GO:0045273">
    <property type="term" value="C:respiratory chain complex II (succinate dehydrogenase)"/>
    <property type="evidence" value="ECO:0000314"/>
    <property type="project" value="UniProtKB"/>
</dbReference>
<dbReference type="GO" id="GO:0051537">
    <property type="term" value="F:2 iron, 2 sulfur cluster binding"/>
    <property type="evidence" value="ECO:0007669"/>
    <property type="project" value="UniProtKB-KW"/>
</dbReference>
<dbReference type="GO" id="GO:0051538">
    <property type="term" value="F:3 iron, 4 sulfur cluster binding"/>
    <property type="evidence" value="ECO:0007669"/>
    <property type="project" value="UniProtKB-KW"/>
</dbReference>
<dbReference type="GO" id="GO:0051539">
    <property type="term" value="F:4 iron, 4 sulfur cluster binding"/>
    <property type="evidence" value="ECO:0007669"/>
    <property type="project" value="UniProtKB-KW"/>
</dbReference>
<dbReference type="GO" id="GO:0009055">
    <property type="term" value="F:electron transfer activity"/>
    <property type="evidence" value="ECO:0007669"/>
    <property type="project" value="InterPro"/>
</dbReference>
<dbReference type="GO" id="GO:0046872">
    <property type="term" value="F:metal ion binding"/>
    <property type="evidence" value="ECO:0007669"/>
    <property type="project" value="UniProtKB-KW"/>
</dbReference>
<dbReference type="GO" id="GO:0008177">
    <property type="term" value="F:succinate dehydrogenase (quinone) activity"/>
    <property type="evidence" value="ECO:0007669"/>
    <property type="project" value="UniProtKB-EC"/>
</dbReference>
<dbReference type="GO" id="GO:0009060">
    <property type="term" value="P:aerobic respiration"/>
    <property type="evidence" value="ECO:0000318"/>
    <property type="project" value="GO_Central"/>
</dbReference>
<dbReference type="GO" id="GO:0022904">
    <property type="term" value="P:respiratory electron transport chain"/>
    <property type="evidence" value="ECO:0000318"/>
    <property type="project" value="GO_Central"/>
</dbReference>
<dbReference type="GO" id="GO:0006099">
    <property type="term" value="P:tricarboxylic acid cycle"/>
    <property type="evidence" value="ECO:0007669"/>
    <property type="project" value="UniProtKB-UniPathway"/>
</dbReference>
<dbReference type="CDD" id="cd00207">
    <property type="entry name" value="fer2"/>
    <property type="match status" value="1"/>
</dbReference>
<dbReference type="FunFam" id="3.10.20.30:FF:000027">
    <property type="entry name" value="Succinate dehydrogenase [ubiquinone] iron-sulfur subunit, mitochondrial"/>
    <property type="match status" value="1"/>
</dbReference>
<dbReference type="FunFam" id="1.10.1060.10:FF:000001">
    <property type="entry name" value="Succinate dehydrogenase iron-sulfur subunit SdhB"/>
    <property type="match status" value="1"/>
</dbReference>
<dbReference type="Gene3D" id="3.10.20.30">
    <property type="match status" value="1"/>
</dbReference>
<dbReference type="Gene3D" id="1.10.1060.10">
    <property type="entry name" value="Alpha-helical ferredoxin"/>
    <property type="match status" value="1"/>
</dbReference>
<dbReference type="InterPro" id="IPR036010">
    <property type="entry name" value="2Fe-2S_ferredoxin-like_sf"/>
</dbReference>
<dbReference type="InterPro" id="IPR001041">
    <property type="entry name" value="2Fe-2S_ferredoxin-type"/>
</dbReference>
<dbReference type="InterPro" id="IPR006058">
    <property type="entry name" value="2Fe2S_fd_BS"/>
</dbReference>
<dbReference type="InterPro" id="IPR017896">
    <property type="entry name" value="4Fe4S_Fe-S-bd"/>
</dbReference>
<dbReference type="InterPro" id="IPR017900">
    <property type="entry name" value="4Fe4S_Fe_S_CS"/>
</dbReference>
<dbReference type="InterPro" id="IPR012675">
    <property type="entry name" value="Beta-grasp_dom_sf"/>
</dbReference>
<dbReference type="InterPro" id="IPR009051">
    <property type="entry name" value="Helical_ferredxn"/>
</dbReference>
<dbReference type="InterPro" id="IPR050573">
    <property type="entry name" value="SDH/FRD_Iron-Sulfur"/>
</dbReference>
<dbReference type="InterPro" id="IPR004489">
    <property type="entry name" value="Succ_DH/fum_Rdtase_Fe-S"/>
</dbReference>
<dbReference type="InterPro" id="IPR025192">
    <property type="entry name" value="Succ_DH/fum_Rdtase_N"/>
</dbReference>
<dbReference type="NCBIfam" id="TIGR00384">
    <property type="entry name" value="dhsB"/>
    <property type="match status" value="1"/>
</dbReference>
<dbReference type="NCBIfam" id="NF004616">
    <property type="entry name" value="PRK05950.1"/>
    <property type="match status" value="1"/>
</dbReference>
<dbReference type="PANTHER" id="PTHR11921:SF29">
    <property type="entry name" value="SUCCINATE DEHYDROGENASE [UBIQUINONE] IRON-SULFUR SUBUNIT, MITOCHONDRIAL"/>
    <property type="match status" value="1"/>
</dbReference>
<dbReference type="PANTHER" id="PTHR11921">
    <property type="entry name" value="SUCCINATE DEHYDROGENASE IRON-SULFUR PROTEIN"/>
    <property type="match status" value="1"/>
</dbReference>
<dbReference type="Pfam" id="PF13085">
    <property type="entry name" value="Fer2_3"/>
    <property type="match status" value="1"/>
</dbReference>
<dbReference type="Pfam" id="PF13534">
    <property type="entry name" value="Fer4_17"/>
    <property type="match status" value="1"/>
</dbReference>
<dbReference type="SUPFAM" id="SSF54292">
    <property type="entry name" value="2Fe-2S ferredoxin-like"/>
    <property type="match status" value="1"/>
</dbReference>
<dbReference type="SUPFAM" id="SSF46548">
    <property type="entry name" value="alpha-helical ferredoxin"/>
    <property type="match status" value="1"/>
</dbReference>
<dbReference type="PROSITE" id="PS00197">
    <property type="entry name" value="2FE2S_FER_1"/>
    <property type="match status" value="1"/>
</dbReference>
<dbReference type="PROSITE" id="PS51085">
    <property type="entry name" value="2FE2S_FER_2"/>
    <property type="match status" value="1"/>
</dbReference>
<dbReference type="PROSITE" id="PS00198">
    <property type="entry name" value="4FE4S_FER_1"/>
    <property type="match status" value="1"/>
</dbReference>
<dbReference type="PROSITE" id="PS51379">
    <property type="entry name" value="4FE4S_FER_2"/>
    <property type="match status" value="1"/>
</dbReference>
<accession>Q9S827</accession>
<accession>A0A0N7KP69</accession>
<evidence type="ECO:0000250" key="1">
    <source>
        <dbReference type="UniProtKB" id="P07014"/>
    </source>
</evidence>
<evidence type="ECO:0000250" key="2">
    <source>
        <dbReference type="UniProtKB" id="Q8LBZ7"/>
    </source>
</evidence>
<evidence type="ECO:0000255" key="3"/>
<evidence type="ECO:0000255" key="4">
    <source>
        <dbReference type="PROSITE-ProRule" id="PRU00465"/>
    </source>
</evidence>
<evidence type="ECO:0000255" key="5">
    <source>
        <dbReference type="PROSITE-ProRule" id="PRU00711"/>
    </source>
</evidence>
<evidence type="ECO:0000256" key="6">
    <source>
        <dbReference type="SAM" id="MobiDB-lite"/>
    </source>
</evidence>
<evidence type="ECO:0000269" key="7">
    <source>
    </source>
</evidence>
<evidence type="ECO:0000305" key="8"/>
<evidence type="ECO:0000312" key="9">
    <source>
        <dbReference type="EMBL" id="BAD09055.1"/>
    </source>
</evidence>
<evidence type="ECO:0000312" key="10">
    <source>
        <dbReference type="EMBL" id="BAF22790.1"/>
    </source>
</evidence>
<reference key="1">
    <citation type="journal article" date="1999" name="Proc. Natl. Acad. Sci. U.S.A.">
        <title>A single nuclear transcript encoding mitochondrial RPS14 and SDHB of rice is processed by alternative splicing: common use of the same mitochondrial targeting signal for different proteins.</title>
        <authorList>
            <person name="Kubo N."/>
            <person name="Harada K."/>
            <person name="Hirai A."/>
            <person name="Kadowaki K."/>
        </authorList>
    </citation>
    <scope>NUCLEOTIDE SEQUENCE [GENOMIC DNA / MRNA]</scope>
    <source>
        <strain>cv. Nohrin 8</strain>
        <tissue>Seedling</tissue>
    </source>
</reference>
<reference key="2">
    <citation type="journal article" date="2005" name="Nature">
        <title>The map-based sequence of the rice genome.</title>
        <authorList>
            <consortium name="International rice genome sequencing project (IRGSP)"/>
        </authorList>
    </citation>
    <scope>NUCLEOTIDE SEQUENCE [LARGE SCALE GENOMIC DNA]</scope>
    <source>
        <strain>cv. Nipponbare</strain>
    </source>
</reference>
<reference key="3">
    <citation type="journal article" date="2008" name="Nucleic Acids Res.">
        <title>The rice annotation project database (RAP-DB): 2008 update.</title>
        <authorList>
            <consortium name="The rice annotation project (RAP)"/>
        </authorList>
    </citation>
    <scope>GENOME REANNOTATION</scope>
    <source>
        <strain>cv. Nipponbare</strain>
    </source>
</reference>
<reference key="4">
    <citation type="journal article" date="2013" name="Rice">
        <title>Improvement of the Oryza sativa Nipponbare reference genome using next generation sequence and optical map data.</title>
        <authorList>
            <person name="Kawahara Y."/>
            <person name="de la Bastide M."/>
            <person name="Hamilton J.P."/>
            <person name="Kanamori H."/>
            <person name="McCombie W.R."/>
            <person name="Ouyang S."/>
            <person name="Schwartz D.C."/>
            <person name="Tanaka T."/>
            <person name="Wu J."/>
            <person name="Zhou S."/>
            <person name="Childs K.L."/>
            <person name="Davidson R.M."/>
            <person name="Lin H."/>
            <person name="Quesada-Ocampo L."/>
            <person name="Vaillancourt B."/>
            <person name="Sakai H."/>
            <person name="Lee S.S."/>
            <person name="Kim J."/>
            <person name="Numa H."/>
            <person name="Itoh T."/>
            <person name="Buell C.R."/>
            <person name="Matsumoto T."/>
        </authorList>
    </citation>
    <scope>GENOME REANNOTATION</scope>
    <source>
        <strain>cv. Nipponbare</strain>
    </source>
</reference>
<reference key="5">
    <citation type="journal article" date="2003" name="Science">
        <title>Collection, mapping, and annotation of over 28,000 cDNA clones from japonica rice.</title>
        <authorList>
            <consortium name="The rice full-length cDNA consortium"/>
        </authorList>
    </citation>
    <scope>NUCLEOTIDE SEQUENCE [LARGE SCALE MRNA]</scope>
    <source>
        <strain>cv. Nipponbare</strain>
    </source>
</reference>
<reference key="6">
    <citation type="journal article" date="2010" name="Plant Mol. Biol.">
        <title>Functional and composition differences between mitochondrial complex II in Arabidopsis and rice are correlated with the complex genetic history of the enzyme.</title>
        <authorList>
            <person name="Huang S."/>
            <person name="Taylor N.L."/>
            <person name="Narsai R."/>
            <person name="Eubel H."/>
            <person name="Whelan J."/>
            <person name="Millar A.H."/>
        </authorList>
    </citation>
    <scope>PROTEIN SEQUENCE OF 226-231 AND 237-247</scope>
    <scope>IDENTIFICATION BY MASS SPECTROMETRY</scope>
    <scope>SUBUNIT</scope>
</reference>
<proteinExistence type="evidence at protein level"/>
<gene>
    <name evidence="8" type="primary">SDH2-1</name>
    <name evidence="10" type="ordered locus">Os08g0120000</name>
    <name evidence="8" type="ordered locus">LOC_Os08g02640</name>
    <name evidence="9" type="ORF">OJ1005_B05.29-1</name>
</gene>
<keyword id="KW-0001">2Fe-2S</keyword>
<keyword id="KW-0003">3Fe-4S</keyword>
<keyword id="KW-0004">4Fe-4S</keyword>
<keyword id="KW-0903">Direct protein sequencing</keyword>
<keyword id="KW-0249">Electron transport</keyword>
<keyword id="KW-0408">Iron</keyword>
<keyword id="KW-0411">Iron-sulfur</keyword>
<keyword id="KW-0472">Membrane</keyword>
<keyword id="KW-0479">Metal-binding</keyword>
<keyword id="KW-0496">Mitochondrion</keyword>
<keyword id="KW-0999">Mitochondrion inner membrane</keyword>
<keyword id="KW-0560">Oxidoreductase</keyword>
<keyword id="KW-1185">Reference proteome</keyword>
<keyword id="KW-0809">Transit peptide</keyword>
<keyword id="KW-0813">Transport</keyword>
<keyword id="KW-0816">Tricarboxylic acid cycle</keyword>
<protein>
    <recommendedName>
        <fullName>Succinate dehydrogenase [ubiquinone] iron-sulfur subunit 1, mitochondrial</fullName>
        <ecNumber evidence="8">1.3.5.1</ecNumber>
    </recommendedName>
    <alternativeName>
        <fullName>Iron-sulfur subunit of complex II</fullName>
        <shortName>Ip</shortName>
    </alternativeName>
</protein>
<feature type="transit peptide" description="Mitochondrion" evidence="3">
    <location>
        <begin position="1"/>
        <end position="25"/>
    </location>
</feature>
<feature type="chain" id="PRO_0000431743" description="Succinate dehydrogenase [ubiquinone] iron-sulfur subunit 1, mitochondrial" evidence="3">
    <location>
        <begin position="26"/>
        <end position="281"/>
    </location>
</feature>
<feature type="domain" description="2Fe-2S ferredoxin-type" evidence="4">
    <location>
        <begin position="49"/>
        <end position="141"/>
    </location>
</feature>
<feature type="domain" description="4Fe-4S ferredoxin-type" evidence="5">
    <location>
        <begin position="184"/>
        <end position="214"/>
    </location>
</feature>
<feature type="region of interest" description="Disordered" evidence="6">
    <location>
        <begin position="26"/>
        <end position="48"/>
    </location>
</feature>
<feature type="binding site" evidence="1">
    <location>
        <position position="102"/>
    </location>
    <ligand>
        <name>[2Fe-2S] cluster</name>
        <dbReference type="ChEBI" id="CHEBI:190135"/>
    </ligand>
</feature>
<feature type="binding site" evidence="1">
    <location>
        <position position="107"/>
    </location>
    <ligand>
        <name>[2Fe-2S] cluster</name>
        <dbReference type="ChEBI" id="CHEBI:190135"/>
    </ligand>
</feature>
<feature type="binding site" evidence="1">
    <location>
        <position position="122"/>
    </location>
    <ligand>
        <name>[2Fe-2S] cluster</name>
        <dbReference type="ChEBI" id="CHEBI:190135"/>
    </ligand>
</feature>
<feature type="binding site" evidence="1">
    <location>
        <position position="194"/>
    </location>
    <ligand>
        <name>[4Fe-4S] cluster</name>
        <dbReference type="ChEBI" id="CHEBI:49883"/>
    </ligand>
</feature>
<feature type="binding site" evidence="1">
    <location>
        <position position="197"/>
    </location>
    <ligand>
        <name>[4Fe-4S] cluster</name>
        <dbReference type="ChEBI" id="CHEBI:49883"/>
    </ligand>
</feature>
<feature type="binding site" evidence="1">
    <location>
        <position position="200"/>
    </location>
    <ligand>
        <name>[4Fe-4S] cluster</name>
        <dbReference type="ChEBI" id="CHEBI:49883"/>
    </ligand>
</feature>
<feature type="binding site" evidence="1">
    <location>
        <position position="204"/>
    </location>
    <ligand>
        <name>[3Fe-4S] cluster</name>
        <dbReference type="ChEBI" id="CHEBI:21137"/>
    </ligand>
</feature>
<feature type="binding site" evidence="1">
    <location>
        <position position="209"/>
    </location>
    <ligand>
        <name>a ubiquinone</name>
        <dbReference type="ChEBI" id="CHEBI:16389"/>
        <note>ligand shared with SdhD subunit</note>
    </ligand>
</feature>
<feature type="binding site" evidence="1">
    <location>
        <position position="251"/>
    </location>
    <ligand>
        <name>[3Fe-4S] cluster</name>
        <dbReference type="ChEBI" id="CHEBI:21137"/>
    </ligand>
</feature>
<feature type="binding site" evidence="1">
    <location>
        <position position="257"/>
    </location>
    <ligand>
        <name>[3Fe-4S] cluster</name>
        <dbReference type="ChEBI" id="CHEBI:21137"/>
    </ligand>
</feature>
<feature type="binding site" evidence="1">
    <location>
        <position position="261"/>
    </location>
    <ligand>
        <name>[4Fe-4S] cluster</name>
        <dbReference type="ChEBI" id="CHEBI:49883"/>
    </ligand>
</feature>